<organism>
    <name type="scientific">Mus musculus</name>
    <name type="common">Mouse</name>
    <dbReference type="NCBI Taxonomy" id="10090"/>
    <lineage>
        <taxon>Eukaryota</taxon>
        <taxon>Metazoa</taxon>
        <taxon>Chordata</taxon>
        <taxon>Craniata</taxon>
        <taxon>Vertebrata</taxon>
        <taxon>Euteleostomi</taxon>
        <taxon>Mammalia</taxon>
        <taxon>Eutheria</taxon>
        <taxon>Euarchontoglires</taxon>
        <taxon>Glires</taxon>
        <taxon>Rodentia</taxon>
        <taxon>Myomorpha</taxon>
        <taxon>Muroidea</taxon>
        <taxon>Muridae</taxon>
        <taxon>Murinae</taxon>
        <taxon>Mus</taxon>
        <taxon>Mus</taxon>
    </lineage>
</organism>
<comment type="function">
    <text evidence="1 5">Lysozymes have primarily a bacteriolytic function; those in tissues and body fluids are associated with the monocyte-macrophage system and enhance the activity of immunoagents. Lyz2 is active against a range of Gram-positive and Gram-negative bacteria. More effective than Lyz1 in killing Gram-negative bacteria. Lyz1 and Lyz2 are equally effective in killing Gram-positive bacteria.</text>
</comment>
<comment type="catalytic activity">
    <reaction>
        <text>Hydrolysis of (1-&gt;4)-beta-linkages between N-acetylmuramic acid and N-acetyl-D-glucosamine residues in a peptidoglycan and between N-acetyl-D-glucosamine residues in chitodextrins.</text>
        <dbReference type="EC" id="3.2.1.17"/>
    </reaction>
</comment>
<comment type="biophysicochemical properties">
    <phDependence>
        <text evidence="3">Optimum pH is 5.</text>
    </phDependence>
</comment>
<comment type="subunit">
    <text evidence="3">Monomer.</text>
</comment>
<comment type="subcellular location">
    <subcellularLocation>
        <location>Secreted</location>
    </subcellularLocation>
</comment>
<comment type="tissue specificity">
    <text>Expressed weakly in myeloblasts, moderately in immature macrophages, and strongly in both mature macrophages and macrophage-rich tissues.</text>
</comment>
<comment type="disruption phenotype">
    <text evidence="2 4 5 6 7">Mice display increased inflammation in response to M.luteus infection, impaired digestion of M.luteus cell walls, decreased clearance of P.aeruginosa from infected airways, increased susceptibility to K.pneumoniae infection and increased bacterial burden and mortality following infection with various Gram-negative bacteria. Lyz2 is non-immunogenic in wild-type mice but is rendered immunogenic in mutants.</text>
</comment>
<comment type="miscellaneous">
    <text>Lysozyme C is capable of both hydrolysis and transglycosylation; it also shows a slight esterase activity. It acts rapidly on both peptide-substituted and unsubstituted peptidoglycan, and slowly on chitin oligosaccharides.</text>
</comment>
<comment type="similarity">
    <text evidence="1">Belongs to the glycosyl hydrolase 22 family.</text>
</comment>
<comment type="sequence caution" evidence="9">
    <conflict type="erroneous initiation">
        <sequence resource="EMBL-CDS" id="BAE30022"/>
    </conflict>
</comment>
<comment type="sequence caution" evidence="9">
    <conflict type="erroneous initiation">
        <sequence resource="EMBL-CDS" id="BAE31835"/>
    </conflict>
</comment>
<comment type="sequence caution" evidence="9">
    <conflict type="erroneous initiation">
        <sequence resource="EMBL-CDS" id="BAE34954"/>
    </conflict>
</comment>
<protein>
    <recommendedName>
        <fullName>Lysozyme C-2</fullName>
        <ecNumber>3.2.1.17</ecNumber>
    </recommendedName>
    <alternativeName>
        <fullName>1,4-beta-N-acetylmuramidase C</fullName>
    </alternativeName>
    <alternativeName>
        <fullName>Lysozyme C type M</fullName>
    </alternativeName>
</protein>
<gene>
    <name type="primary">Lyz2</name>
    <name type="synonym">Lyz</name>
    <name type="synonym">Lyzs</name>
</gene>
<proteinExistence type="evidence at protein level"/>
<dbReference type="EC" id="3.2.1.17"/>
<dbReference type="EMBL" id="M21050">
    <property type="protein sequence ID" value="AAA39473.1"/>
    <property type="molecule type" value="Genomic_DNA"/>
</dbReference>
<dbReference type="EMBL" id="M21047">
    <property type="protein sequence ID" value="AAA39473.1"/>
    <property type="status" value="JOINED"/>
    <property type="molecule type" value="Genomic_DNA"/>
</dbReference>
<dbReference type="EMBL" id="M21048">
    <property type="protein sequence ID" value="AAA39473.1"/>
    <property type="status" value="JOINED"/>
    <property type="molecule type" value="Genomic_DNA"/>
</dbReference>
<dbReference type="EMBL" id="M21049">
    <property type="protein sequence ID" value="AAA39473.1"/>
    <property type="status" value="JOINED"/>
    <property type="molecule type" value="Genomic_DNA"/>
</dbReference>
<dbReference type="EMBL" id="AK148516">
    <property type="protein sequence ID" value="BAE28595.1"/>
    <property type="molecule type" value="mRNA"/>
</dbReference>
<dbReference type="EMBL" id="AK150998">
    <property type="protein sequence ID" value="BAE30022.1"/>
    <property type="status" value="ALT_INIT"/>
    <property type="molecule type" value="mRNA"/>
</dbReference>
<dbReference type="EMBL" id="AK153244">
    <property type="protein sequence ID" value="BAE31835.1"/>
    <property type="status" value="ALT_INIT"/>
    <property type="molecule type" value="mRNA"/>
</dbReference>
<dbReference type="EMBL" id="AK153475">
    <property type="protein sequence ID" value="BAE32025.1"/>
    <property type="molecule type" value="mRNA"/>
</dbReference>
<dbReference type="EMBL" id="AK159276">
    <property type="protein sequence ID" value="BAE34954.1"/>
    <property type="status" value="ALT_INIT"/>
    <property type="molecule type" value="mRNA"/>
</dbReference>
<dbReference type="EMBL" id="AK159640">
    <property type="protein sequence ID" value="BAE35253.1"/>
    <property type="molecule type" value="mRNA"/>
</dbReference>
<dbReference type="EMBL" id="BC002069">
    <property type="protein sequence ID" value="AAH02069.1"/>
    <property type="molecule type" value="mRNA"/>
</dbReference>
<dbReference type="EMBL" id="BC019611">
    <property type="protein sequence ID" value="AAH19611.1"/>
    <property type="molecule type" value="mRNA"/>
</dbReference>
<dbReference type="EMBL" id="BC054463">
    <property type="protein sequence ID" value="AAH54463.1"/>
    <property type="molecule type" value="mRNA"/>
</dbReference>
<dbReference type="CCDS" id="CCDS48694.1"/>
<dbReference type="PIR" id="A31239">
    <property type="entry name" value="A31239"/>
</dbReference>
<dbReference type="RefSeq" id="NP_059068.1">
    <property type="nucleotide sequence ID" value="NM_017372.3"/>
</dbReference>
<dbReference type="PDB" id="1IVM">
    <property type="method" value="NMR"/>
    <property type="chains" value="A=19-148"/>
</dbReference>
<dbReference type="PDBsum" id="1IVM"/>
<dbReference type="SMR" id="P08905"/>
<dbReference type="FunCoup" id="P08905">
    <property type="interactions" value="123"/>
</dbReference>
<dbReference type="IntAct" id="P08905">
    <property type="interactions" value="3"/>
</dbReference>
<dbReference type="STRING" id="10090.ENSMUSP00000089801"/>
<dbReference type="CAZy" id="GH22">
    <property type="family name" value="Glycoside Hydrolase Family 22"/>
</dbReference>
<dbReference type="iPTMnet" id="P08905"/>
<dbReference type="PhosphoSitePlus" id="P08905"/>
<dbReference type="jPOST" id="P08905"/>
<dbReference type="PaxDb" id="10090-ENSMUSP00000089801"/>
<dbReference type="PeptideAtlas" id="P08905"/>
<dbReference type="ProteomicsDB" id="292156"/>
<dbReference type="Pumba" id="P08905"/>
<dbReference type="DNASU" id="17105"/>
<dbReference type="Ensembl" id="ENSMUST00000092163.9">
    <property type="protein sequence ID" value="ENSMUSP00000089801.8"/>
    <property type="gene ID" value="ENSMUSG00000069516.9"/>
</dbReference>
<dbReference type="GeneID" id="17105"/>
<dbReference type="KEGG" id="mmu:17105"/>
<dbReference type="UCSC" id="uc007hda.1">
    <property type="organism name" value="mouse"/>
</dbReference>
<dbReference type="AGR" id="MGI:96897"/>
<dbReference type="CTD" id="17105"/>
<dbReference type="MGI" id="MGI:96897">
    <property type="gene designation" value="Lyz2"/>
</dbReference>
<dbReference type="VEuPathDB" id="HostDB:ENSMUSG00000069516"/>
<dbReference type="eggNOG" id="ENOG502S1S1">
    <property type="taxonomic scope" value="Eukaryota"/>
</dbReference>
<dbReference type="GeneTree" id="ENSGT00940000153832"/>
<dbReference type="HOGENOM" id="CLU_111620_0_1_1"/>
<dbReference type="InParanoid" id="P08905"/>
<dbReference type="OMA" id="VYERCEF"/>
<dbReference type="OrthoDB" id="17373at2759"/>
<dbReference type="PhylomeDB" id="P08905"/>
<dbReference type="TreeFam" id="TF324882"/>
<dbReference type="Reactome" id="R-MMU-6798695">
    <property type="pathway name" value="Neutrophil degranulation"/>
</dbReference>
<dbReference type="Reactome" id="R-MMU-6803157">
    <property type="pathway name" value="Antimicrobial peptides"/>
</dbReference>
<dbReference type="BioGRID-ORCS" id="17105">
    <property type="hits" value="1 hit in 78 CRISPR screens"/>
</dbReference>
<dbReference type="ChiTaRS" id="Lyz2">
    <property type="organism name" value="mouse"/>
</dbReference>
<dbReference type="EvolutionaryTrace" id="P08905"/>
<dbReference type="PRO" id="PR:P08905"/>
<dbReference type="Proteomes" id="UP000000589">
    <property type="component" value="Chromosome 10"/>
</dbReference>
<dbReference type="RNAct" id="P08905">
    <property type="molecule type" value="protein"/>
</dbReference>
<dbReference type="Bgee" id="ENSMUSG00000069516">
    <property type="expression patterns" value="Expressed in stroma of bone marrow and 225 other cell types or tissues"/>
</dbReference>
<dbReference type="ExpressionAtlas" id="P08905">
    <property type="expression patterns" value="baseline and differential"/>
</dbReference>
<dbReference type="GO" id="GO:0005576">
    <property type="term" value="C:extracellular region"/>
    <property type="evidence" value="ECO:0007669"/>
    <property type="project" value="UniProtKB-SubCell"/>
</dbReference>
<dbReference type="GO" id="GO:0003796">
    <property type="term" value="F:lysozyme activity"/>
    <property type="evidence" value="ECO:0000314"/>
    <property type="project" value="UniProtKB"/>
</dbReference>
<dbReference type="GO" id="GO:0042742">
    <property type="term" value="P:defense response to bacterium"/>
    <property type="evidence" value="ECO:0000315"/>
    <property type="project" value="UniProtKB"/>
</dbReference>
<dbReference type="GO" id="GO:0050829">
    <property type="term" value="P:defense response to Gram-negative bacterium"/>
    <property type="evidence" value="ECO:0000314"/>
    <property type="project" value="UniProtKB"/>
</dbReference>
<dbReference type="GO" id="GO:0050830">
    <property type="term" value="P:defense response to Gram-positive bacterium"/>
    <property type="evidence" value="ECO:0000314"/>
    <property type="project" value="UniProtKB"/>
</dbReference>
<dbReference type="GO" id="GO:0031640">
    <property type="term" value="P:killing of cells of another organism"/>
    <property type="evidence" value="ECO:0007669"/>
    <property type="project" value="UniProtKB-KW"/>
</dbReference>
<dbReference type="CDD" id="cd16897">
    <property type="entry name" value="LYZ_C"/>
    <property type="match status" value="1"/>
</dbReference>
<dbReference type="FunFam" id="1.10.530.10:FF:000001">
    <property type="entry name" value="Lysozyme C"/>
    <property type="match status" value="1"/>
</dbReference>
<dbReference type="Gene3D" id="1.10.530.10">
    <property type="match status" value="1"/>
</dbReference>
<dbReference type="InterPro" id="IPR001916">
    <property type="entry name" value="Glyco_hydro_22"/>
</dbReference>
<dbReference type="InterPro" id="IPR019799">
    <property type="entry name" value="Glyco_hydro_22_CS"/>
</dbReference>
<dbReference type="InterPro" id="IPR000974">
    <property type="entry name" value="Glyco_hydro_22_lys"/>
</dbReference>
<dbReference type="InterPro" id="IPR023346">
    <property type="entry name" value="Lysozyme-like_dom_sf"/>
</dbReference>
<dbReference type="PANTHER" id="PTHR11407">
    <property type="entry name" value="LYSOZYME C"/>
    <property type="match status" value="1"/>
</dbReference>
<dbReference type="PANTHER" id="PTHR11407:SF28">
    <property type="entry name" value="LYSOZYME C"/>
    <property type="match status" value="1"/>
</dbReference>
<dbReference type="Pfam" id="PF00062">
    <property type="entry name" value="Lys"/>
    <property type="match status" value="1"/>
</dbReference>
<dbReference type="PRINTS" id="PR00137">
    <property type="entry name" value="LYSOZYME"/>
</dbReference>
<dbReference type="PRINTS" id="PR00135">
    <property type="entry name" value="LYZLACT"/>
</dbReference>
<dbReference type="SMART" id="SM00263">
    <property type="entry name" value="LYZ1"/>
    <property type="match status" value="1"/>
</dbReference>
<dbReference type="SUPFAM" id="SSF53955">
    <property type="entry name" value="Lysozyme-like"/>
    <property type="match status" value="1"/>
</dbReference>
<dbReference type="PROSITE" id="PS00128">
    <property type="entry name" value="GLYCOSYL_HYDROL_F22_1"/>
    <property type="match status" value="1"/>
</dbReference>
<dbReference type="PROSITE" id="PS51348">
    <property type="entry name" value="GLYCOSYL_HYDROL_F22_2"/>
    <property type="match status" value="1"/>
</dbReference>
<reference key="1">
    <citation type="journal article" date="1988" name="Proc. Natl. Acad. Sci. U.S.A.">
        <title>Mouse lysozyme M gene: isolation, characterization, and expression studies.</title>
        <authorList>
            <person name="Cross M."/>
            <person name="Mangelsdorf I."/>
            <person name="Wedel A."/>
            <person name="Renkawitz R."/>
        </authorList>
    </citation>
    <scope>NUCLEOTIDE SEQUENCE [GENOMIC DNA]</scope>
</reference>
<reference key="2">
    <citation type="journal article" date="2005" name="Science">
        <title>The transcriptional landscape of the mammalian genome.</title>
        <authorList>
            <person name="Carninci P."/>
            <person name="Kasukawa T."/>
            <person name="Katayama S."/>
            <person name="Gough J."/>
            <person name="Frith M.C."/>
            <person name="Maeda N."/>
            <person name="Oyama R."/>
            <person name="Ravasi T."/>
            <person name="Lenhard B."/>
            <person name="Wells C."/>
            <person name="Kodzius R."/>
            <person name="Shimokawa K."/>
            <person name="Bajic V.B."/>
            <person name="Brenner S.E."/>
            <person name="Batalov S."/>
            <person name="Forrest A.R."/>
            <person name="Zavolan M."/>
            <person name="Davis M.J."/>
            <person name="Wilming L.G."/>
            <person name="Aidinis V."/>
            <person name="Allen J.E."/>
            <person name="Ambesi-Impiombato A."/>
            <person name="Apweiler R."/>
            <person name="Aturaliya R.N."/>
            <person name="Bailey T.L."/>
            <person name="Bansal M."/>
            <person name="Baxter L."/>
            <person name="Beisel K.W."/>
            <person name="Bersano T."/>
            <person name="Bono H."/>
            <person name="Chalk A.M."/>
            <person name="Chiu K.P."/>
            <person name="Choudhary V."/>
            <person name="Christoffels A."/>
            <person name="Clutterbuck D.R."/>
            <person name="Crowe M.L."/>
            <person name="Dalla E."/>
            <person name="Dalrymple B.P."/>
            <person name="de Bono B."/>
            <person name="Della Gatta G."/>
            <person name="di Bernardo D."/>
            <person name="Down T."/>
            <person name="Engstrom P."/>
            <person name="Fagiolini M."/>
            <person name="Faulkner G."/>
            <person name="Fletcher C.F."/>
            <person name="Fukushima T."/>
            <person name="Furuno M."/>
            <person name="Futaki S."/>
            <person name="Gariboldi M."/>
            <person name="Georgii-Hemming P."/>
            <person name="Gingeras T.R."/>
            <person name="Gojobori T."/>
            <person name="Green R.E."/>
            <person name="Gustincich S."/>
            <person name="Harbers M."/>
            <person name="Hayashi Y."/>
            <person name="Hensch T.K."/>
            <person name="Hirokawa N."/>
            <person name="Hill D."/>
            <person name="Huminiecki L."/>
            <person name="Iacono M."/>
            <person name="Ikeo K."/>
            <person name="Iwama A."/>
            <person name="Ishikawa T."/>
            <person name="Jakt M."/>
            <person name="Kanapin A."/>
            <person name="Katoh M."/>
            <person name="Kawasawa Y."/>
            <person name="Kelso J."/>
            <person name="Kitamura H."/>
            <person name="Kitano H."/>
            <person name="Kollias G."/>
            <person name="Krishnan S.P."/>
            <person name="Kruger A."/>
            <person name="Kummerfeld S.K."/>
            <person name="Kurochkin I.V."/>
            <person name="Lareau L.F."/>
            <person name="Lazarevic D."/>
            <person name="Lipovich L."/>
            <person name="Liu J."/>
            <person name="Liuni S."/>
            <person name="McWilliam S."/>
            <person name="Madan Babu M."/>
            <person name="Madera M."/>
            <person name="Marchionni L."/>
            <person name="Matsuda H."/>
            <person name="Matsuzawa S."/>
            <person name="Miki H."/>
            <person name="Mignone F."/>
            <person name="Miyake S."/>
            <person name="Morris K."/>
            <person name="Mottagui-Tabar S."/>
            <person name="Mulder N."/>
            <person name="Nakano N."/>
            <person name="Nakauchi H."/>
            <person name="Ng P."/>
            <person name="Nilsson R."/>
            <person name="Nishiguchi S."/>
            <person name="Nishikawa S."/>
            <person name="Nori F."/>
            <person name="Ohara O."/>
            <person name="Okazaki Y."/>
            <person name="Orlando V."/>
            <person name="Pang K.C."/>
            <person name="Pavan W.J."/>
            <person name="Pavesi G."/>
            <person name="Pesole G."/>
            <person name="Petrovsky N."/>
            <person name="Piazza S."/>
            <person name="Reed J."/>
            <person name="Reid J.F."/>
            <person name="Ring B.Z."/>
            <person name="Ringwald M."/>
            <person name="Rost B."/>
            <person name="Ruan Y."/>
            <person name="Salzberg S.L."/>
            <person name="Sandelin A."/>
            <person name="Schneider C."/>
            <person name="Schoenbach C."/>
            <person name="Sekiguchi K."/>
            <person name="Semple C.A."/>
            <person name="Seno S."/>
            <person name="Sessa L."/>
            <person name="Sheng Y."/>
            <person name="Shibata Y."/>
            <person name="Shimada H."/>
            <person name="Shimada K."/>
            <person name="Silva D."/>
            <person name="Sinclair B."/>
            <person name="Sperling S."/>
            <person name="Stupka E."/>
            <person name="Sugiura K."/>
            <person name="Sultana R."/>
            <person name="Takenaka Y."/>
            <person name="Taki K."/>
            <person name="Tammoja K."/>
            <person name="Tan S.L."/>
            <person name="Tang S."/>
            <person name="Taylor M.S."/>
            <person name="Tegner J."/>
            <person name="Teichmann S.A."/>
            <person name="Ueda H.R."/>
            <person name="van Nimwegen E."/>
            <person name="Verardo R."/>
            <person name="Wei C.L."/>
            <person name="Yagi K."/>
            <person name="Yamanishi H."/>
            <person name="Zabarovsky E."/>
            <person name="Zhu S."/>
            <person name="Zimmer A."/>
            <person name="Hide W."/>
            <person name="Bult C."/>
            <person name="Grimmond S.M."/>
            <person name="Teasdale R.D."/>
            <person name="Liu E.T."/>
            <person name="Brusic V."/>
            <person name="Quackenbush J."/>
            <person name="Wahlestedt C."/>
            <person name="Mattick J.S."/>
            <person name="Hume D.A."/>
            <person name="Kai C."/>
            <person name="Sasaki D."/>
            <person name="Tomaru Y."/>
            <person name="Fukuda S."/>
            <person name="Kanamori-Katayama M."/>
            <person name="Suzuki M."/>
            <person name="Aoki J."/>
            <person name="Arakawa T."/>
            <person name="Iida J."/>
            <person name="Imamura K."/>
            <person name="Itoh M."/>
            <person name="Kato T."/>
            <person name="Kawaji H."/>
            <person name="Kawagashira N."/>
            <person name="Kawashima T."/>
            <person name="Kojima M."/>
            <person name="Kondo S."/>
            <person name="Konno H."/>
            <person name="Nakano K."/>
            <person name="Ninomiya N."/>
            <person name="Nishio T."/>
            <person name="Okada M."/>
            <person name="Plessy C."/>
            <person name="Shibata K."/>
            <person name="Shiraki T."/>
            <person name="Suzuki S."/>
            <person name="Tagami M."/>
            <person name="Waki K."/>
            <person name="Watahiki A."/>
            <person name="Okamura-Oho Y."/>
            <person name="Suzuki H."/>
            <person name="Kawai J."/>
            <person name="Hayashizaki Y."/>
        </authorList>
    </citation>
    <scope>NUCLEOTIDE SEQUENCE [LARGE SCALE MRNA]</scope>
    <source>
        <strain>C57BL/6J</strain>
        <tissue>Bone marrow macrophage</tissue>
        <tissue>Pancreatic islet</tissue>
    </source>
</reference>
<reference key="3">
    <citation type="journal article" date="2004" name="Genome Res.">
        <title>The status, quality, and expansion of the NIH full-length cDNA project: the Mammalian Gene Collection (MGC).</title>
        <authorList>
            <consortium name="The MGC Project Team"/>
        </authorList>
    </citation>
    <scope>NUCLEOTIDE SEQUENCE [LARGE SCALE MRNA]</scope>
    <source>
        <strain>FVB/N</strain>
        <strain>FVB/N-3</strain>
        <tissue>Mammary tumor</tissue>
    </source>
</reference>
<reference key="4">
    <citation type="book" date="1974" name="Lysozyme">
        <title>Sequence studies of mouse lysozyme.</title>
        <editorList>
            <person name="Osserman E.F."/>
            <person name="Canfield R.E."/>
            <person name="Beychok S."/>
        </editorList>
        <authorList>
            <person name="Riblet R.J."/>
        </authorList>
    </citation>
    <scope>PROTEIN SEQUENCE OF 19-78</scope>
</reference>
<reference key="5">
    <citation type="journal article" date="2003" name="Blood">
        <title>Increased inflammation in lysozyme M-deficient mice in response to Micrococcus luteus and its peptidoglycan.</title>
        <authorList>
            <person name="Ganz T."/>
            <person name="Gabayan V."/>
            <person name="Liao H.-I."/>
            <person name="Liu L."/>
            <person name="Oren A."/>
            <person name="Graf T."/>
            <person name="Cole A.M."/>
        </authorList>
    </citation>
    <scope>DISRUPTION PHENOTYPE</scope>
</reference>
<reference key="6">
    <citation type="journal article" date="2004" name="Am. J. Respir. Crit. Care Med.">
        <title>Mouse lysozyme M is important in pulmonary host defense against Klebsiella pneumoniae infection.</title>
        <authorList>
            <person name="Markart P."/>
            <person name="Korfhagen T.R."/>
            <person name="Weaver T.E."/>
            <person name="Akinbi H.T."/>
        </authorList>
    </citation>
    <scope>DISRUPTION PHENOTYPE</scope>
</reference>
<reference key="7">
    <citation type="journal article" date="2004" name="Biochem. J.">
        <title>Comparison of the microbicidal and muramidase activities of mouse lysozyme M and P.</title>
        <authorList>
            <person name="Markart P."/>
            <person name="Faust N."/>
            <person name="Graf T."/>
            <person name="Na C.-L."/>
            <person name="Weaver T.E."/>
            <person name="Akinbi H.T."/>
        </authorList>
    </citation>
    <scope>FUNCTION</scope>
    <scope>DISRUPTION PHENOTYPE</scope>
</reference>
<reference key="8">
    <citation type="journal article" date="2004" name="J. Immunol.">
        <title>Mouse lysozyme-M knockout mice reveal how the self-determinant hierarchy shapes the T cell repertoire against this circulating self antigen in wild-type mice.</title>
        <authorList>
            <person name="Sinha P."/>
            <person name="Chi H.H."/>
            <person name="Kim H.R."/>
            <person name="Clausen B.E."/>
            <person name="Pederson B."/>
            <person name="Sercarz E.E."/>
            <person name="Forster I."/>
            <person name="Moudgil K.D."/>
        </authorList>
    </citation>
    <scope>DISRUPTION PHENOTYPE</scope>
</reference>
<reference key="9">
    <citation type="journal article" date="2005" name="J. Leukoc. Biol.">
        <title>Decreased clearance of Pseudomonas aeruginosa from airways of mice deficient in lysozyme M.</title>
        <authorList>
            <person name="Cole A.M."/>
            <person name="Thapa D.R."/>
            <person name="Gabayan V."/>
            <person name="Liao H.-I."/>
            <person name="Liu L."/>
            <person name="Ganz T."/>
        </authorList>
    </citation>
    <scope>DISRUPTION PHENOTYPE</scope>
</reference>
<reference key="10">
    <citation type="journal article" date="2010" name="Cell">
        <title>A tissue-specific atlas of mouse protein phosphorylation and expression.</title>
        <authorList>
            <person name="Huttlin E.L."/>
            <person name="Jedrychowski M.P."/>
            <person name="Elias J.E."/>
            <person name="Goswami T."/>
            <person name="Rad R."/>
            <person name="Beausoleil S.A."/>
            <person name="Villen J."/>
            <person name="Haas W."/>
            <person name="Sowa M.E."/>
            <person name="Gygi S.P."/>
        </authorList>
    </citation>
    <scope>IDENTIFICATION BY MASS SPECTROMETRY [LARGE SCALE ANALYSIS]</scope>
    <source>
        <tissue>Heart</tissue>
        <tissue>Kidney</tissue>
        <tissue>Liver</tissue>
        <tissue>Lung</tissue>
        <tissue>Spleen</tissue>
    </source>
</reference>
<reference key="11">
    <citation type="journal article" date="2003" name="Cell. Mol. Life Sci.">
        <title>Solution structure and activity of mouse lysozyme M.</title>
        <authorList>
            <person name="Obita T."/>
            <person name="Ueda T."/>
            <person name="Imoto T."/>
        </authorList>
    </citation>
    <scope>STRUCTURE BY NMR OF 19-148</scope>
    <scope>BIOPHYSICOCHEMICAL PROPERTIES</scope>
    <scope>SUBUNIT</scope>
    <scope>DISULFIDE BONDS</scope>
</reference>
<evidence type="ECO:0000255" key="1">
    <source>
        <dbReference type="PROSITE-ProRule" id="PRU00680"/>
    </source>
</evidence>
<evidence type="ECO:0000269" key="2">
    <source>
    </source>
</evidence>
<evidence type="ECO:0000269" key="3">
    <source>
    </source>
</evidence>
<evidence type="ECO:0000269" key="4">
    <source>
    </source>
</evidence>
<evidence type="ECO:0000269" key="5">
    <source>
    </source>
</evidence>
<evidence type="ECO:0000269" key="6">
    <source>
    </source>
</evidence>
<evidence type="ECO:0000269" key="7">
    <source>
    </source>
</evidence>
<evidence type="ECO:0000269" key="8">
    <source ref="4"/>
</evidence>
<evidence type="ECO:0000305" key="9"/>
<evidence type="ECO:0007829" key="10">
    <source>
        <dbReference type="PDB" id="1IVM"/>
    </source>
</evidence>
<sequence>MKTLLTLGLLLLSVTAQAKVYERCEFARTLKRNGMAGYYGVSLADWVCLAQHESNYNTRATNYNRGDQSTDYGIFQINSRYWCNDGKTPRAVNACGINCSALLQDDITAAIQCAKRVVRDPQGIRAWVAWRAHCQNRDLSQYIRNCGV</sequence>
<accession>P08905</accession>
<accession>Q3TXG2</accession>
<accession>Q3U5Q2</accession>
<accession>Q3U690</accession>
<accession>Q8VE78</accession>
<name>LYZ2_MOUSE</name>
<keyword id="KW-0002">3D-structure</keyword>
<keyword id="KW-0929">Antimicrobial</keyword>
<keyword id="KW-0081">Bacteriolytic enzyme</keyword>
<keyword id="KW-0903">Direct protein sequencing</keyword>
<keyword id="KW-1015">Disulfide bond</keyword>
<keyword id="KW-0326">Glycosidase</keyword>
<keyword id="KW-0378">Hydrolase</keyword>
<keyword id="KW-0494">Milk protein</keyword>
<keyword id="KW-1185">Reference proteome</keyword>
<keyword id="KW-0964">Secreted</keyword>
<keyword id="KW-0732">Signal</keyword>
<feature type="signal peptide" evidence="8">
    <location>
        <begin position="1"/>
        <end position="18"/>
    </location>
</feature>
<feature type="chain" id="PRO_0000018472" description="Lysozyme C-2">
    <location>
        <begin position="19"/>
        <end position="148"/>
    </location>
</feature>
<feature type="domain" description="C-type lysozyme" evidence="1">
    <location>
        <begin position="19"/>
        <end position="148"/>
    </location>
</feature>
<feature type="active site" evidence="1">
    <location>
        <position position="53"/>
    </location>
</feature>
<feature type="active site" evidence="1">
    <location>
        <position position="71"/>
    </location>
</feature>
<feature type="disulfide bond" evidence="1 3">
    <location>
        <begin position="24"/>
        <end position="146"/>
    </location>
</feature>
<feature type="disulfide bond" evidence="1 3">
    <location>
        <begin position="48"/>
        <end position="134"/>
    </location>
</feature>
<feature type="disulfide bond" evidence="1 3">
    <location>
        <begin position="83"/>
        <end position="99"/>
    </location>
</feature>
<feature type="disulfide bond" evidence="1 3">
    <location>
        <begin position="95"/>
        <end position="113"/>
    </location>
</feature>
<feature type="helix" evidence="10">
    <location>
        <begin position="23"/>
        <end position="33"/>
    </location>
</feature>
<feature type="strand" evidence="10">
    <location>
        <begin position="39"/>
        <end position="41"/>
    </location>
</feature>
<feature type="helix" evidence="10">
    <location>
        <begin position="43"/>
        <end position="53"/>
    </location>
</feature>
<feature type="strand" evidence="10">
    <location>
        <begin position="56"/>
        <end position="58"/>
    </location>
</feature>
<feature type="strand" evidence="10">
    <location>
        <begin position="61"/>
        <end position="64"/>
    </location>
</feature>
<feature type="helix" evidence="10">
    <location>
        <begin position="65"/>
        <end position="67"/>
    </location>
</feature>
<feature type="strand" evidence="10">
    <location>
        <begin position="69"/>
        <end position="72"/>
    </location>
</feature>
<feature type="turn" evidence="10">
    <location>
        <begin position="73"/>
        <end position="76"/>
    </location>
</feature>
<feature type="turn" evidence="10">
    <location>
        <begin position="79"/>
        <end position="81"/>
    </location>
</feature>
<feature type="strand" evidence="10">
    <location>
        <begin position="82"/>
        <end position="84"/>
    </location>
</feature>
<feature type="helix" evidence="10">
    <location>
        <begin position="99"/>
        <end position="102"/>
    </location>
</feature>
<feature type="strand" evidence="10">
    <location>
        <begin position="103"/>
        <end position="105"/>
    </location>
</feature>
<feature type="helix" evidence="10">
    <location>
        <begin position="108"/>
        <end position="118"/>
    </location>
</feature>
<feature type="strand" evidence="10">
    <location>
        <begin position="120"/>
        <end position="122"/>
    </location>
</feature>
<feature type="helix" evidence="10">
    <location>
        <begin position="124"/>
        <end position="126"/>
    </location>
</feature>
<feature type="helix" evidence="10">
    <location>
        <begin position="128"/>
        <end position="131"/>
    </location>
</feature>
<feature type="turn" evidence="10">
    <location>
        <begin position="132"/>
        <end position="136"/>
    </location>
</feature>
<feature type="helix" evidence="10">
    <location>
        <begin position="140"/>
        <end position="143"/>
    </location>
</feature>